<protein>
    <recommendedName>
        <fullName evidence="1">Thymidylate synthase</fullName>
        <shortName evidence="1">TS</shortName>
        <shortName evidence="1">TSase</shortName>
        <ecNumber evidence="1">2.1.1.45</ecNumber>
    </recommendedName>
</protein>
<gene>
    <name evidence="1" type="primary">thyA</name>
    <name type="ordered locus">bbp_386</name>
</gene>
<sequence>MKSYLVLLKKILKEGSNRKDRTGIGTLSVFGYHMEFNLKLGFPLITTKKCHFPAIVHELLWFLKGDTNIKYLNDHNISIWNPWADERGYLGPIYGEQWRSWKTKDGRVIDQIDNVIHLIKNNPNSRRIVVSSWNVGDLHKMALLPCHVLFQFHVVDHVLHCQLYQRSCDVFLGLPFNIASYSLLTHMIAQQCNLKVGNFIWTGGDVHLYKNHIKQAKKQILRRPYLLPKLVINRKPTQIFNYLLQDFNLLNYKYHPSIHAKIAI</sequence>
<accession>P59427</accession>
<feature type="chain" id="PRO_0000140946" description="Thymidylate synthase">
    <location>
        <begin position="1"/>
        <end position="264"/>
    </location>
</feature>
<feature type="active site" description="Nucleophile" evidence="1">
    <location>
        <position position="146"/>
    </location>
</feature>
<feature type="binding site" description="in other chain" evidence="1">
    <location>
        <position position="21"/>
    </location>
    <ligand>
        <name>dUMP</name>
        <dbReference type="ChEBI" id="CHEBI:246422"/>
        <note>ligand shared between dimeric partners</note>
    </ligand>
</feature>
<feature type="binding site" evidence="1">
    <location>
        <position position="51"/>
    </location>
    <ligand>
        <name>(6R)-5,10-methylene-5,6,7,8-tetrahydrofolate</name>
        <dbReference type="ChEBI" id="CHEBI:15636"/>
    </ligand>
</feature>
<feature type="binding site" evidence="1">
    <location>
        <begin position="126"/>
        <end position="127"/>
    </location>
    <ligand>
        <name>dUMP</name>
        <dbReference type="ChEBI" id="CHEBI:246422"/>
        <note>ligand shared between dimeric partners</note>
    </ligand>
</feature>
<feature type="binding site" description="in other chain" evidence="1">
    <location>
        <begin position="166"/>
        <end position="169"/>
    </location>
    <ligand>
        <name>dUMP</name>
        <dbReference type="ChEBI" id="CHEBI:246422"/>
        <note>ligand shared between dimeric partners</note>
    </ligand>
</feature>
<feature type="binding site" evidence="1">
    <location>
        <position position="169"/>
    </location>
    <ligand>
        <name>(6R)-5,10-methylene-5,6,7,8-tetrahydrofolate</name>
        <dbReference type="ChEBI" id="CHEBI:15636"/>
    </ligand>
</feature>
<feature type="binding site" description="in other chain" evidence="1">
    <location>
        <position position="177"/>
    </location>
    <ligand>
        <name>dUMP</name>
        <dbReference type="ChEBI" id="CHEBI:246422"/>
        <note>ligand shared between dimeric partners</note>
    </ligand>
</feature>
<feature type="binding site" description="in other chain" evidence="1">
    <location>
        <begin position="207"/>
        <end position="209"/>
    </location>
    <ligand>
        <name>dUMP</name>
        <dbReference type="ChEBI" id="CHEBI:246422"/>
        <note>ligand shared between dimeric partners</note>
    </ligand>
</feature>
<feature type="binding site" evidence="1">
    <location>
        <position position="263"/>
    </location>
    <ligand>
        <name>(6R)-5,10-methylene-5,6,7,8-tetrahydrofolate</name>
        <dbReference type="ChEBI" id="CHEBI:15636"/>
    </ligand>
</feature>
<keyword id="KW-0963">Cytoplasm</keyword>
<keyword id="KW-0489">Methyltransferase</keyword>
<keyword id="KW-0545">Nucleotide biosynthesis</keyword>
<keyword id="KW-1185">Reference proteome</keyword>
<keyword id="KW-0808">Transferase</keyword>
<evidence type="ECO:0000255" key="1">
    <source>
        <dbReference type="HAMAP-Rule" id="MF_00008"/>
    </source>
</evidence>
<name>TYSY_BUCBP</name>
<proteinExistence type="inferred from homology"/>
<organism>
    <name type="scientific">Buchnera aphidicola subsp. Baizongia pistaciae (strain Bp)</name>
    <dbReference type="NCBI Taxonomy" id="224915"/>
    <lineage>
        <taxon>Bacteria</taxon>
        <taxon>Pseudomonadati</taxon>
        <taxon>Pseudomonadota</taxon>
        <taxon>Gammaproteobacteria</taxon>
        <taxon>Enterobacterales</taxon>
        <taxon>Erwiniaceae</taxon>
        <taxon>Buchnera</taxon>
    </lineage>
</organism>
<reference key="1">
    <citation type="journal article" date="2003" name="Proc. Natl. Acad. Sci. U.S.A.">
        <title>Reductive genome evolution in Buchnera aphidicola.</title>
        <authorList>
            <person name="van Ham R.C.H.J."/>
            <person name="Kamerbeek J."/>
            <person name="Palacios C."/>
            <person name="Rausell C."/>
            <person name="Abascal F."/>
            <person name="Bastolla U."/>
            <person name="Fernandez J.M."/>
            <person name="Jimenez L."/>
            <person name="Postigo M."/>
            <person name="Silva F.J."/>
            <person name="Tamames J."/>
            <person name="Viguera E."/>
            <person name="Latorre A."/>
            <person name="Valencia A."/>
            <person name="Moran F."/>
            <person name="Moya A."/>
        </authorList>
    </citation>
    <scope>NUCLEOTIDE SEQUENCE [LARGE SCALE GENOMIC DNA]</scope>
    <source>
        <strain>Bp</strain>
    </source>
</reference>
<comment type="function">
    <text evidence="1">Catalyzes the reductive methylation of 2'-deoxyuridine-5'-monophosphate (dUMP) to 2'-deoxythymidine-5'-monophosphate (dTMP) while utilizing 5,10-methylenetetrahydrofolate (mTHF) as the methyl donor and reductant in the reaction, yielding dihydrofolate (DHF) as a by-product. This enzymatic reaction provides an intracellular de novo source of dTMP, an essential precursor for DNA biosynthesis.</text>
</comment>
<comment type="catalytic activity">
    <reaction evidence="1">
        <text>dUMP + (6R)-5,10-methylene-5,6,7,8-tetrahydrofolate = 7,8-dihydrofolate + dTMP</text>
        <dbReference type="Rhea" id="RHEA:12104"/>
        <dbReference type="ChEBI" id="CHEBI:15636"/>
        <dbReference type="ChEBI" id="CHEBI:57451"/>
        <dbReference type="ChEBI" id="CHEBI:63528"/>
        <dbReference type="ChEBI" id="CHEBI:246422"/>
        <dbReference type="EC" id="2.1.1.45"/>
    </reaction>
</comment>
<comment type="pathway">
    <text evidence="1">Pyrimidine metabolism; dTTP biosynthesis.</text>
</comment>
<comment type="subunit">
    <text evidence="1">Homodimer.</text>
</comment>
<comment type="subcellular location">
    <subcellularLocation>
        <location evidence="1">Cytoplasm</location>
    </subcellularLocation>
</comment>
<comment type="similarity">
    <text evidence="1">Belongs to the thymidylate synthase family. Bacterial-type ThyA subfamily.</text>
</comment>
<dbReference type="EC" id="2.1.1.45" evidence="1"/>
<dbReference type="EMBL" id="AE016826">
    <property type="protein sequence ID" value="AAO27098.1"/>
    <property type="molecule type" value="Genomic_DNA"/>
</dbReference>
<dbReference type="RefSeq" id="WP_011091499.1">
    <property type="nucleotide sequence ID" value="NC_004545.1"/>
</dbReference>
<dbReference type="SMR" id="P59427"/>
<dbReference type="STRING" id="224915.bbp_386"/>
<dbReference type="KEGG" id="bab:bbp_386"/>
<dbReference type="eggNOG" id="COG0207">
    <property type="taxonomic scope" value="Bacteria"/>
</dbReference>
<dbReference type="HOGENOM" id="CLU_021669_0_0_6"/>
<dbReference type="OrthoDB" id="9774633at2"/>
<dbReference type="UniPathway" id="UPA00575"/>
<dbReference type="Proteomes" id="UP000000601">
    <property type="component" value="Chromosome"/>
</dbReference>
<dbReference type="GO" id="GO:0005829">
    <property type="term" value="C:cytosol"/>
    <property type="evidence" value="ECO:0007669"/>
    <property type="project" value="TreeGrafter"/>
</dbReference>
<dbReference type="GO" id="GO:0004799">
    <property type="term" value="F:thymidylate synthase activity"/>
    <property type="evidence" value="ECO:0007669"/>
    <property type="project" value="UniProtKB-UniRule"/>
</dbReference>
<dbReference type="GO" id="GO:0006231">
    <property type="term" value="P:dTMP biosynthetic process"/>
    <property type="evidence" value="ECO:0007669"/>
    <property type="project" value="UniProtKB-UniRule"/>
</dbReference>
<dbReference type="GO" id="GO:0006235">
    <property type="term" value="P:dTTP biosynthetic process"/>
    <property type="evidence" value="ECO:0007669"/>
    <property type="project" value="UniProtKB-UniRule"/>
</dbReference>
<dbReference type="GO" id="GO:0032259">
    <property type="term" value="P:methylation"/>
    <property type="evidence" value="ECO:0007669"/>
    <property type="project" value="UniProtKB-KW"/>
</dbReference>
<dbReference type="CDD" id="cd00351">
    <property type="entry name" value="TS_Pyrimidine_HMase"/>
    <property type="match status" value="1"/>
</dbReference>
<dbReference type="FunFam" id="3.30.572.10:FF:000013">
    <property type="entry name" value="Thymidylate synthase"/>
    <property type="match status" value="1"/>
</dbReference>
<dbReference type="Gene3D" id="3.30.572.10">
    <property type="entry name" value="Thymidylate synthase/dCMP hydroxymethylase domain"/>
    <property type="match status" value="1"/>
</dbReference>
<dbReference type="HAMAP" id="MF_00008">
    <property type="entry name" value="Thymidy_synth_bact"/>
    <property type="match status" value="1"/>
</dbReference>
<dbReference type="InterPro" id="IPR045097">
    <property type="entry name" value="Thymidate_synth/dCMP_Mease"/>
</dbReference>
<dbReference type="InterPro" id="IPR023451">
    <property type="entry name" value="Thymidate_synth/dCMP_Mease_dom"/>
</dbReference>
<dbReference type="InterPro" id="IPR036926">
    <property type="entry name" value="Thymidate_synth/dCMP_Mease_sf"/>
</dbReference>
<dbReference type="InterPro" id="IPR000398">
    <property type="entry name" value="Thymidylate_synthase"/>
</dbReference>
<dbReference type="InterPro" id="IPR020940">
    <property type="entry name" value="Thymidylate_synthase_AS"/>
</dbReference>
<dbReference type="NCBIfam" id="NF002497">
    <property type="entry name" value="PRK01827.1-3"/>
    <property type="match status" value="1"/>
</dbReference>
<dbReference type="NCBIfam" id="NF002499">
    <property type="entry name" value="PRK01827.1-5"/>
    <property type="match status" value="1"/>
</dbReference>
<dbReference type="NCBIfam" id="TIGR03284">
    <property type="entry name" value="thym_sym"/>
    <property type="match status" value="1"/>
</dbReference>
<dbReference type="PANTHER" id="PTHR11548:SF9">
    <property type="entry name" value="THYMIDYLATE SYNTHASE"/>
    <property type="match status" value="1"/>
</dbReference>
<dbReference type="PANTHER" id="PTHR11548">
    <property type="entry name" value="THYMIDYLATE SYNTHASE 1"/>
    <property type="match status" value="1"/>
</dbReference>
<dbReference type="Pfam" id="PF00303">
    <property type="entry name" value="Thymidylat_synt"/>
    <property type="match status" value="1"/>
</dbReference>
<dbReference type="PRINTS" id="PR00108">
    <property type="entry name" value="THYMDSNTHASE"/>
</dbReference>
<dbReference type="SUPFAM" id="SSF55831">
    <property type="entry name" value="Thymidylate synthase/dCMP hydroxymethylase"/>
    <property type="match status" value="1"/>
</dbReference>
<dbReference type="PROSITE" id="PS00091">
    <property type="entry name" value="THYMIDYLATE_SYNTHASE"/>
    <property type="match status" value="1"/>
</dbReference>